<comment type="function">
    <text evidence="1">Uniporter that promotes Zn(2+) import from the extracellular space to the cytoplasm across the cell membrane. The transport activity is temperature dependent. May play a role in neurulation and neurite extension. May play a key role in maintaining intracellular zinc content at levels that reduce the inhibitory effects of rises in oxidative stress on spermatogonia and spermatozoa viability during spermatogenesis.</text>
</comment>
<comment type="catalytic activity">
    <reaction evidence="1">
        <text>Zn(2+)(in) = Zn(2+)(out)</text>
        <dbReference type="Rhea" id="RHEA:29351"/>
        <dbReference type="ChEBI" id="CHEBI:29105"/>
    </reaction>
</comment>
<comment type="subcellular location">
    <subcellularLocation>
        <location evidence="1">Membrane</location>
        <topology evidence="2">Multi-pass membrane protein</topology>
    </subcellularLocation>
    <text evidence="1">At low Zn(2+) extracellular concentration, is redistributed from the perinuclear space to the cytoplasm and plasma membrane.</text>
</comment>
<comment type="alternative products">
    <event type="alternative splicing"/>
    <isoform>
        <id>Q504Y0-1</id>
        <name>1</name>
        <sequence type="displayed"/>
    </isoform>
    <isoform>
        <id>Q504Y0-2</id>
        <name>2</name>
        <sequence type="described" ref="VSP_029847 VSP_029848"/>
    </isoform>
    <isoform>
        <id>Q504Y0-3</id>
        <name>3</name>
        <sequence type="described" ref="VSP_029849"/>
    </isoform>
    <isoform>
        <id>Q504Y0-4</id>
        <name>4</name>
        <sequence type="described" ref="VSP_029850"/>
    </isoform>
    <isoform>
        <id>Q504Y0-5</id>
        <name>5</name>
        <sequence type="described" ref="VSP_057594"/>
    </isoform>
</comment>
<comment type="tissue specificity">
    <text evidence="3 4">Expressed in brain and eye.</text>
</comment>
<comment type="similarity">
    <text evidence="10">Belongs to the ZIP transporter (TC 2.A.5) family.</text>
</comment>
<reference key="1">
    <citation type="journal article" date="2004" name="Nat. Genet.">
        <title>Complete sequencing and characterization of 21,243 full-length human cDNAs.</title>
        <authorList>
            <person name="Ota T."/>
            <person name="Suzuki Y."/>
            <person name="Nishikawa T."/>
            <person name="Otsuki T."/>
            <person name="Sugiyama T."/>
            <person name="Irie R."/>
            <person name="Wakamatsu A."/>
            <person name="Hayashi K."/>
            <person name="Sato H."/>
            <person name="Nagai K."/>
            <person name="Kimura K."/>
            <person name="Makita H."/>
            <person name="Sekine M."/>
            <person name="Obayashi M."/>
            <person name="Nishi T."/>
            <person name="Shibahara T."/>
            <person name="Tanaka T."/>
            <person name="Ishii S."/>
            <person name="Yamamoto J."/>
            <person name="Saito K."/>
            <person name="Kawai Y."/>
            <person name="Isono Y."/>
            <person name="Nakamura Y."/>
            <person name="Nagahari K."/>
            <person name="Murakami K."/>
            <person name="Yasuda T."/>
            <person name="Iwayanagi T."/>
            <person name="Wagatsuma M."/>
            <person name="Shiratori A."/>
            <person name="Sudo H."/>
            <person name="Hosoiri T."/>
            <person name="Kaku Y."/>
            <person name="Kodaira H."/>
            <person name="Kondo H."/>
            <person name="Sugawara M."/>
            <person name="Takahashi M."/>
            <person name="Kanda K."/>
            <person name="Yokoi T."/>
            <person name="Furuya T."/>
            <person name="Kikkawa E."/>
            <person name="Omura Y."/>
            <person name="Abe K."/>
            <person name="Kamihara K."/>
            <person name="Katsuta N."/>
            <person name="Sato K."/>
            <person name="Tanikawa M."/>
            <person name="Yamazaki M."/>
            <person name="Ninomiya K."/>
            <person name="Ishibashi T."/>
            <person name="Yamashita H."/>
            <person name="Murakawa K."/>
            <person name="Fujimori K."/>
            <person name="Tanai H."/>
            <person name="Kimata M."/>
            <person name="Watanabe M."/>
            <person name="Hiraoka S."/>
            <person name="Chiba Y."/>
            <person name="Ishida S."/>
            <person name="Ono Y."/>
            <person name="Takiguchi S."/>
            <person name="Watanabe S."/>
            <person name="Yosida M."/>
            <person name="Hotuta T."/>
            <person name="Kusano J."/>
            <person name="Kanehori K."/>
            <person name="Takahashi-Fujii A."/>
            <person name="Hara H."/>
            <person name="Tanase T.-O."/>
            <person name="Nomura Y."/>
            <person name="Togiya S."/>
            <person name="Komai F."/>
            <person name="Hara R."/>
            <person name="Takeuchi K."/>
            <person name="Arita M."/>
            <person name="Imose N."/>
            <person name="Musashino K."/>
            <person name="Yuuki H."/>
            <person name="Oshima A."/>
            <person name="Sasaki N."/>
            <person name="Aotsuka S."/>
            <person name="Yoshikawa Y."/>
            <person name="Matsunawa H."/>
            <person name="Ichihara T."/>
            <person name="Shiohata N."/>
            <person name="Sano S."/>
            <person name="Moriya S."/>
            <person name="Momiyama H."/>
            <person name="Satoh N."/>
            <person name="Takami S."/>
            <person name="Terashima Y."/>
            <person name="Suzuki O."/>
            <person name="Nakagawa S."/>
            <person name="Senoh A."/>
            <person name="Mizoguchi H."/>
            <person name="Goto Y."/>
            <person name="Shimizu F."/>
            <person name="Wakebe H."/>
            <person name="Hishigaki H."/>
            <person name="Watanabe T."/>
            <person name="Sugiyama A."/>
            <person name="Takemoto M."/>
            <person name="Kawakami B."/>
            <person name="Yamazaki M."/>
            <person name="Watanabe K."/>
            <person name="Kumagai A."/>
            <person name="Itakura S."/>
            <person name="Fukuzumi Y."/>
            <person name="Fujimori Y."/>
            <person name="Komiyama M."/>
            <person name="Tashiro H."/>
            <person name="Tanigami A."/>
            <person name="Fujiwara T."/>
            <person name="Ono T."/>
            <person name="Yamada K."/>
            <person name="Fujii Y."/>
            <person name="Ozaki K."/>
            <person name="Hirao M."/>
            <person name="Ohmori Y."/>
            <person name="Kawabata A."/>
            <person name="Hikiji T."/>
            <person name="Kobatake N."/>
            <person name="Inagaki H."/>
            <person name="Ikema Y."/>
            <person name="Okamoto S."/>
            <person name="Okitani R."/>
            <person name="Kawakami T."/>
            <person name="Noguchi S."/>
            <person name="Itoh T."/>
            <person name="Shigeta K."/>
            <person name="Senba T."/>
            <person name="Matsumura K."/>
            <person name="Nakajima Y."/>
            <person name="Mizuno T."/>
            <person name="Morinaga M."/>
            <person name="Sasaki M."/>
            <person name="Togashi T."/>
            <person name="Oyama M."/>
            <person name="Hata H."/>
            <person name="Watanabe M."/>
            <person name="Komatsu T."/>
            <person name="Mizushima-Sugano J."/>
            <person name="Satoh T."/>
            <person name="Shirai Y."/>
            <person name="Takahashi Y."/>
            <person name="Nakagawa K."/>
            <person name="Okumura K."/>
            <person name="Nagase T."/>
            <person name="Nomura N."/>
            <person name="Kikuchi H."/>
            <person name="Masuho Y."/>
            <person name="Yamashita R."/>
            <person name="Nakai K."/>
            <person name="Yada T."/>
            <person name="Nakamura Y."/>
            <person name="Ohara O."/>
            <person name="Isogai T."/>
            <person name="Sugano S."/>
        </authorList>
    </citation>
    <scope>NUCLEOTIDE SEQUENCE [LARGE SCALE MRNA] (ISOFORMS 3 AND 5)</scope>
    <scope>VARIANT ILE-304</scope>
    <source>
        <tissue>Brain</tissue>
        <tissue>Caudate nucleus</tissue>
    </source>
</reference>
<reference key="2">
    <citation type="journal article" date="2004" name="Nature">
        <title>The DNA sequence and comparative analysis of human chromosome 10.</title>
        <authorList>
            <person name="Deloukas P."/>
            <person name="Earthrowl M.E."/>
            <person name="Grafham D.V."/>
            <person name="Rubenfield M."/>
            <person name="French L."/>
            <person name="Steward C.A."/>
            <person name="Sims S.K."/>
            <person name="Jones M.C."/>
            <person name="Searle S."/>
            <person name="Scott C."/>
            <person name="Howe K."/>
            <person name="Hunt S.E."/>
            <person name="Andrews T.D."/>
            <person name="Gilbert J.G.R."/>
            <person name="Swarbreck D."/>
            <person name="Ashurst J.L."/>
            <person name="Taylor A."/>
            <person name="Battles J."/>
            <person name="Bird C.P."/>
            <person name="Ainscough R."/>
            <person name="Almeida J.P."/>
            <person name="Ashwell R.I.S."/>
            <person name="Ambrose K.D."/>
            <person name="Babbage A.K."/>
            <person name="Bagguley C.L."/>
            <person name="Bailey J."/>
            <person name="Banerjee R."/>
            <person name="Bates K."/>
            <person name="Beasley H."/>
            <person name="Bray-Allen S."/>
            <person name="Brown A.J."/>
            <person name="Brown J.Y."/>
            <person name="Burford D.C."/>
            <person name="Burrill W."/>
            <person name="Burton J."/>
            <person name="Cahill P."/>
            <person name="Camire D."/>
            <person name="Carter N.P."/>
            <person name="Chapman J.C."/>
            <person name="Clark S.Y."/>
            <person name="Clarke G."/>
            <person name="Clee C.M."/>
            <person name="Clegg S."/>
            <person name="Corby N."/>
            <person name="Coulson A."/>
            <person name="Dhami P."/>
            <person name="Dutta I."/>
            <person name="Dunn M."/>
            <person name="Faulkner L."/>
            <person name="Frankish A."/>
            <person name="Frankland J.A."/>
            <person name="Garner P."/>
            <person name="Garnett J."/>
            <person name="Gribble S."/>
            <person name="Griffiths C."/>
            <person name="Grocock R."/>
            <person name="Gustafson E."/>
            <person name="Hammond S."/>
            <person name="Harley J.L."/>
            <person name="Hart E."/>
            <person name="Heath P.D."/>
            <person name="Ho T.P."/>
            <person name="Hopkins B."/>
            <person name="Horne J."/>
            <person name="Howden P.J."/>
            <person name="Huckle E."/>
            <person name="Hynds C."/>
            <person name="Johnson C."/>
            <person name="Johnson D."/>
            <person name="Kana A."/>
            <person name="Kay M."/>
            <person name="Kimberley A.M."/>
            <person name="Kershaw J.K."/>
            <person name="Kokkinaki M."/>
            <person name="Laird G.K."/>
            <person name="Lawlor S."/>
            <person name="Lee H.M."/>
            <person name="Leongamornlert D.A."/>
            <person name="Laird G."/>
            <person name="Lloyd C."/>
            <person name="Lloyd D.M."/>
            <person name="Loveland J."/>
            <person name="Lovell J."/>
            <person name="McLaren S."/>
            <person name="McLay K.E."/>
            <person name="McMurray A."/>
            <person name="Mashreghi-Mohammadi M."/>
            <person name="Matthews L."/>
            <person name="Milne S."/>
            <person name="Nickerson T."/>
            <person name="Nguyen M."/>
            <person name="Overton-Larty E."/>
            <person name="Palmer S.A."/>
            <person name="Pearce A.V."/>
            <person name="Peck A.I."/>
            <person name="Pelan S."/>
            <person name="Phillimore B."/>
            <person name="Porter K."/>
            <person name="Rice C.M."/>
            <person name="Rogosin A."/>
            <person name="Ross M.T."/>
            <person name="Sarafidou T."/>
            <person name="Sehra H.K."/>
            <person name="Shownkeen R."/>
            <person name="Skuce C.D."/>
            <person name="Smith M."/>
            <person name="Standring L."/>
            <person name="Sycamore N."/>
            <person name="Tester J."/>
            <person name="Thorpe A."/>
            <person name="Torcasso W."/>
            <person name="Tracey A."/>
            <person name="Tromans A."/>
            <person name="Tsolas J."/>
            <person name="Wall M."/>
            <person name="Walsh J."/>
            <person name="Wang H."/>
            <person name="Weinstock K."/>
            <person name="West A.P."/>
            <person name="Willey D.L."/>
            <person name="Whitehead S.L."/>
            <person name="Wilming L."/>
            <person name="Wray P.W."/>
            <person name="Young L."/>
            <person name="Chen Y."/>
            <person name="Lovering R.C."/>
            <person name="Moschonas N.K."/>
            <person name="Siebert R."/>
            <person name="Fechtel K."/>
            <person name="Bentley D."/>
            <person name="Durbin R.M."/>
            <person name="Hubbard T."/>
            <person name="Doucette-Stamm L."/>
            <person name="Beck S."/>
            <person name="Smith D.R."/>
            <person name="Rogers J."/>
        </authorList>
    </citation>
    <scope>NUCLEOTIDE SEQUENCE [LARGE SCALE GENOMIC DNA]</scope>
</reference>
<reference key="3">
    <citation type="journal article" date="2004" name="Genome Res.">
        <title>The status, quality, and expansion of the NIH full-length cDNA project: the Mammalian Gene Collection (MGC).</title>
        <authorList>
            <consortium name="The MGC Project Team"/>
        </authorList>
    </citation>
    <scope>NUCLEOTIDE SEQUENCE [LARGE SCALE MRNA] (ISOFORMS 1 AND 2)</scope>
    <scope>VARIANTS GLY-36 AND ILE-304</scope>
    <source>
        <tissue>Brain</tissue>
        <tissue>Lung</tissue>
    </source>
</reference>
<reference key="4">
    <citation type="journal article" date="2002" name="Mol. Vis.">
        <title>Expressed sequence tag analysis of human RPE/choroid for the NEIBank project: over 6000 non-redundant transcripts, novel genes and splice variants.</title>
        <authorList>
            <person name="Wistow G."/>
            <person name="Bernstein S.L."/>
            <person name="Wyatt M.K."/>
            <person name="Fariss R.N."/>
            <person name="Behal A."/>
            <person name="Touchman J.W."/>
            <person name="Bouffard G."/>
            <person name="Smith D."/>
            <person name="Peterson K."/>
        </authorList>
    </citation>
    <scope>TISSUE SPECIFICITY</scope>
</reference>
<reference key="5">
    <citation type="journal article" date="2004" name="Genome Res.">
        <title>Sequence comparison of human and mouse genes reveals a homologous block structure in the promoter regions.</title>
        <authorList>
            <person name="Suzuki Y."/>
            <person name="Yamashita R."/>
            <person name="Shirota M."/>
            <person name="Sakakibara Y."/>
            <person name="Chiba J."/>
            <person name="Mizushima-Sugano J."/>
            <person name="Nakai K."/>
            <person name="Sugano S."/>
        </authorList>
    </citation>
    <scope>TISSUE SPECIFICITY</scope>
</reference>
<reference key="6">
    <citation type="journal article" date="2006" name="Schizophr. Res.">
        <title>Examination of the zinc transporter gene, SLC39A12.</title>
        <authorList>
            <person name="Bly M."/>
        </authorList>
    </citation>
    <scope>PROBABLE INVOLVEMENT IN SCHIZOPHRENIA</scope>
    <scope>VARIANT GLY-36</scope>
</reference>
<reference key="7">
    <citation type="journal article" date="2006" name="Science">
        <title>The consensus coding sequences of human breast and colorectal cancers.</title>
        <authorList>
            <person name="Sjoeblom T."/>
            <person name="Jones S."/>
            <person name="Wood L.D."/>
            <person name="Parsons D.W."/>
            <person name="Lin J."/>
            <person name="Barber T.D."/>
            <person name="Mandelker D."/>
            <person name="Leary R.J."/>
            <person name="Ptak J."/>
            <person name="Silliman N."/>
            <person name="Szabo S."/>
            <person name="Buckhaults P."/>
            <person name="Farrell C."/>
            <person name="Meeh P."/>
            <person name="Markowitz S.D."/>
            <person name="Willis J."/>
            <person name="Dawson D."/>
            <person name="Willson J.K.V."/>
            <person name="Gazdar A.F."/>
            <person name="Hartigan J."/>
            <person name="Wu L."/>
            <person name="Liu C."/>
            <person name="Parmigiani G."/>
            <person name="Park B.H."/>
            <person name="Bachman K.E."/>
            <person name="Papadopoulos N."/>
            <person name="Vogelstein B."/>
            <person name="Kinzler K.W."/>
            <person name="Velculescu V.E."/>
        </authorList>
    </citation>
    <scope>VARIANT [LARGE SCALE ANALYSIS] THR-471</scope>
</reference>
<name>S39AC_HUMAN</name>
<organism>
    <name type="scientific">Homo sapiens</name>
    <name type="common">Human</name>
    <dbReference type="NCBI Taxonomy" id="9606"/>
    <lineage>
        <taxon>Eukaryota</taxon>
        <taxon>Metazoa</taxon>
        <taxon>Chordata</taxon>
        <taxon>Craniata</taxon>
        <taxon>Vertebrata</taxon>
        <taxon>Euteleostomi</taxon>
        <taxon>Mammalia</taxon>
        <taxon>Eutheria</taxon>
        <taxon>Euarchontoglires</taxon>
        <taxon>Primates</taxon>
        <taxon>Haplorrhini</taxon>
        <taxon>Catarrhini</taxon>
        <taxon>Hominidae</taxon>
        <taxon>Homo</taxon>
    </lineage>
</organism>
<gene>
    <name evidence="11" type="primary">SLC39A12</name>
    <name evidence="1" type="synonym">ZIP12</name>
</gene>
<sequence length="691" mass="76666">MCFRTKLSVSWVPLFLLLSRVFSTETDKPSAQDSRSRGSSGQPADLLQVLSAGDHPPHNHSRSLIKTLLEKTGCPRRRNGMQGDCNLCFEPDALLLIAGGNFEDQLREEVVQRVSLLLLYYIIHQEEICSSKLNMSNKEYKFYLHSLLSLRQDEDSSFLSQNETEDILAFTRQYFDTSQSQCMETKTLQKKSGIVSSEGANESTLPQLAAMIITLSLQGVCLGQGNLPSPDYFTEYIFSSLNRTNTLRLSELDQLLNTLWTRSTCIKNEKIHQFQRKQNNIITHDQDYSNFSSSMEKESEDGPVSWDQTCFSARQLVEIFLQKGLSLISKEDFKQMSPGIIQQLLSCSCHLPKDQQAKLPPTTLEKYGYSTVAVTLLTLGSMLGTALVLFHSCEENYRLILQLFVGLAVGTLSGDALLHLIPQVLGLHKQEAPEFGHFHESKGHIWKLMGLIGGIHGFFLIEKCFILLVSPNDKQGLSLVNGHVGHSHHLALNSELSDQAGRGKSASTIQLKSPEDSQAAEMPIGSMTASNRKCKAISLLAIMILVGDSLHNFADGLAIGAAFSSSSESGVTTTIAILCHEIPHEMGDFAVLLSSGLSMKTAILMNFISSLTAFMGLYIGLSVSADPCVQDWIFTVTAGMFLYLSLVEMLPEMTHVQTQRPWMMFLLQNFGLILGWLSLLLLAIYEQNIKI</sequence>
<keyword id="KW-0025">Alternative splicing</keyword>
<keyword id="KW-0406">Ion transport</keyword>
<keyword id="KW-0472">Membrane</keyword>
<keyword id="KW-1267">Proteomics identification</keyword>
<keyword id="KW-1185">Reference proteome</keyword>
<keyword id="KW-0812">Transmembrane</keyword>
<keyword id="KW-1133">Transmembrane helix</keyword>
<keyword id="KW-0813">Transport</keyword>
<keyword id="KW-0862">Zinc</keyword>
<keyword id="KW-0864">Zinc transport</keyword>
<feature type="chain" id="PRO_0000312497" description="Zinc transporter ZIP12">
    <location>
        <begin position="1"/>
        <end position="691"/>
    </location>
</feature>
<feature type="topological domain" description="Extracellular" evidence="2">
    <location>
        <begin position="1"/>
        <end position="202"/>
    </location>
</feature>
<feature type="transmembrane region" description="Helical" evidence="2">
    <location>
        <begin position="203"/>
        <end position="223"/>
    </location>
</feature>
<feature type="topological domain" description="Cytoplasmic" evidence="2">
    <location>
        <begin position="224"/>
        <end position="369"/>
    </location>
</feature>
<feature type="transmembrane region" description="Helical" evidence="2">
    <location>
        <begin position="370"/>
        <end position="390"/>
    </location>
</feature>
<feature type="topological domain" description="Extracellular" evidence="2">
    <location>
        <begin position="391"/>
        <end position="398"/>
    </location>
</feature>
<feature type="transmembrane region" description="Helical" evidence="2">
    <location>
        <begin position="399"/>
        <end position="419"/>
    </location>
</feature>
<feature type="topological domain" description="Cytoplasmic" evidence="2">
    <location>
        <begin position="420"/>
        <end position="448"/>
    </location>
</feature>
<feature type="transmembrane region" description="Helical" evidence="2">
    <location>
        <begin position="449"/>
        <end position="469"/>
    </location>
</feature>
<feature type="topological domain" description="Extracellular" evidence="2">
    <location>
        <begin position="470"/>
        <end position="538"/>
    </location>
</feature>
<feature type="transmembrane region" description="Helical" evidence="2">
    <location>
        <begin position="539"/>
        <end position="559"/>
    </location>
</feature>
<feature type="topological domain" description="Cytoplasmic" evidence="2">
    <location>
        <begin position="560"/>
        <end position="602"/>
    </location>
</feature>
<feature type="transmembrane region" description="Helical" evidence="2">
    <location>
        <begin position="603"/>
        <end position="623"/>
    </location>
</feature>
<feature type="topological domain" description="Extracellular" evidence="2">
    <location>
        <begin position="624"/>
        <end position="631"/>
    </location>
</feature>
<feature type="transmembrane region" description="Helical" evidence="2">
    <location>
        <begin position="632"/>
        <end position="652"/>
    </location>
</feature>
<feature type="topological domain" description="Cytoplasmic" evidence="2">
    <location>
        <begin position="653"/>
        <end position="663"/>
    </location>
</feature>
<feature type="transmembrane region" description="Helical" evidence="2">
    <location>
        <begin position="664"/>
        <end position="684"/>
    </location>
</feature>
<feature type="topological domain" description="Extracellular" evidence="2">
    <location>
        <begin position="685"/>
        <end position="691"/>
    </location>
</feature>
<feature type="short sequence motif" description="XEXPHE-motif">
    <location>
        <begin position="580"/>
        <end position="585"/>
    </location>
</feature>
<feature type="splice variant" id="VSP_057594" description="In isoform 5.">
    <location>
        <begin position="1"/>
        <end position="134"/>
    </location>
</feature>
<feature type="splice variant" id="VSP_029847" description="In isoform 2." evidence="9">
    <original>QLLSCSCHLPKDQQAKLPPTTLEKYGYSTVAVTLLTLGSMLGTALVLFHSCEENYRLILQLFVGL</original>
    <variation>RWSFSIAVRRTTGLSYSCLWAWPSGHCLGTLCSTLSLRFLVYISRKPQNLGISMKAKVIFGN</variation>
    <location>
        <begin position="343"/>
        <end position="407"/>
    </location>
</feature>
<feature type="splice variant" id="VSP_029848" description="In isoform 2." evidence="9">
    <location>
        <begin position="408"/>
        <end position="691"/>
    </location>
</feature>
<feature type="splice variant" id="VSP_029849" description="In isoform 3." evidence="8">
    <location>
        <begin position="475"/>
        <end position="511"/>
    </location>
</feature>
<feature type="splice variant" id="VSP_029850" description="In isoform 4." evidence="10">
    <location>
        <position position="475"/>
    </location>
</feature>
<feature type="sequence variant" id="VAR_037516" description="In dbSNP:rs10764176." evidence="5 6">
    <original>S</original>
    <variation>G</variation>
    <location>
        <position position="36"/>
    </location>
</feature>
<feature type="sequence variant" id="VAR_037517" description="In dbSNP:rs7899328.">
    <original>T</original>
    <variation>M</variation>
    <location>
        <position position="244"/>
    </location>
</feature>
<feature type="sequence variant" id="VAR_037518" description="In dbSNP:rs2478568." evidence="5">
    <original>V</original>
    <variation>I</variation>
    <location>
        <position position="304"/>
    </location>
</feature>
<feature type="sequence variant" id="VAR_037519" description="In dbSNP:rs11011935.">
    <original>F</original>
    <variation>L</variation>
    <location>
        <position position="435"/>
    </location>
</feature>
<feature type="sequence variant" id="VAR_037520" description="In a breast cancer sample; somatic mutation." evidence="7">
    <original>P</original>
    <variation>T</variation>
    <location>
        <position position="471"/>
    </location>
</feature>
<feature type="sequence conflict" description="In Ref. 1; BAB70848." evidence="10" ref="1">
    <original>D</original>
    <variation>G</variation>
    <location>
        <position position="287"/>
    </location>
</feature>
<feature type="sequence conflict" description="In Ref. 3; AAH47635." evidence="10" ref="3">
    <original>L</original>
    <variation>R</variation>
    <location>
        <position position="316"/>
    </location>
</feature>
<feature type="sequence conflict" description="In Ref. 1; BAH12025." evidence="10" ref="1">
    <original>Q</original>
    <variation>R</variation>
    <location>
        <position position="423"/>
    </location>
</feature>
<dbReference type="EMBL" id="AK055061">
    <property type="protein sequence ID" value="BAB70848.1"/>
    <property type="molecule type" value="mRNA"/>
</dbReference>
<dbReference type="EMBL" id="AK295294">
    <property type="protein sequence ID" value="BAH12025.1"/>
    <property type="molecule type" value="mRNA"/>
</dbReference>
<dbReference type="EMBL" id="AC069023">
    <property type="status" value="NOT_ANNOTATED_CDS"/>
    <property type="molecule type" value="Genomic_DNA"/>
</dbReference>
<dbReference type="EMBL" id="AL360231">
    <property type="status" value="NOT_ANNOTATED_CDS"/>
    <property type="molecule type" value="Genomic_DNA"/>
</dbReference>
<dbReference type="EMBL" id="AL590111">
    <property type="status" value="NOT_ANNOTATED_CDS"/>
    <property type="molecule type" value="Genomic_DNA"/>
</dbReference>
<dbReference type="EMBL" id="BC035118">
    <property type="protein sequence ID" value="AAH35118.1"/>
    <property type="molecule type" value="mRNA"/>
</dbReference>
<dbReference type="EMBL" id="BC047635">
    <property type="protein sequence ID" value="AAH47635.1"/>
    <property type="molecule type" value="mRNA"/>
</dbReference>
<dbReference type="EMBL" id="BC065917">
    <property type="protein sequence ID" value="AAH65917.1"/>
    <property type="molecule type" value="mRNA"/>
</dbReference>
<dbReference type="EMBL" id="BC094700">
    <property type="protein sequence ID" value="AAH94700.1"/>
    <property type="molecule type" value="mRNA"/>
</dbReference>
<dbReference type="EMBL" id="BC117323">
    <property type="protein sequence ID" value="AAI17324.1"/>
    <property type="molecule type" value="mRNA"/>
</dbReference>
<dbReference type="EMBL" id="BC143551">
    <property type="protein sequence ID" value="AAI43552.1"/>
    <property type="molecule type" value="mRNA"/>
</dbReference>
<dbReference type="CCDS" id="CCDS44362.1">
    <molecule id="Q504Y0-1"/>
</dbReference>
<dbReference type="CCDS" id="CCDS60493.1">
    <molecule id="Q504Y0-4"/>
</dbReference>
<dbReference type="CCDS" id="CCDS60494.1">
    <molecule id="Q504Y0-5"/>
</dbReference>
<dbReference type="CCDS" id="CCDS7124.1">
    <molecule id="Q504Y0-3"/>
</dbReference>
<dbReference type="RefSeq" id="NP_001138667.1">
    <molecule id="Q504Y0-1"/>
    <property type="nucleotide sequence ID" value="NM_001145195.2"/>
</dbReference>
<dbReference type="RefSeq" id="NP_001269662.1">
    <molecule id="Q504Y0-4"/>
    <property type="nucleotide sequence ID" value="NM_001282733.2"/>
</dbReference>
<dbReference type="RefSeq" id="NP_001269663.1">
    <molecule id="Q504Y0-5"/>
    <property type="nucleotide sequence ID" value="NM_001282734.2"/>
</dbReference>
<dbReference type="RefSeq" id="NP_689938.2">
    <molecule id="Q504Y0-3"/>
    <property type="nucleotide sequence ID" value="NM_152725.4"/>
</dbReference>
<dbReference type="SMR" id="Q504Y0"/>
<dbReference type="BioGRID" id="128681">
    <property type="interactions" value="82"/>
</dbReference>
<dbReference type="FunCoup" id="Q504Y0">
    <property type="interactions" value="70"/>
</dbReference>
<dbReference type="IntAct" id="Q504Y0">
    <property type="interactions" value="81"/>
</dbReference>
<dbReference type="STRING" id="9606.ENSP00000366586"/>
<dbReference type="DrugBank" id="DB14533">
    <property type="generic name" value="Zinc chloride"/>
</dbReference>
<dbReference type="DrugBank" id="DB14548">
    <property type="generic name" value="Zinc sulfate, unspecified form"/>
</dbReference>
<dbReference type="TCDB" id="2.A.5.4.14">
    <property type="family name" value="the zinc (zn(2+))-iron (fe(2+)) permease (zip) family"/>
</dbReference>
<dbReference type="iPTMnet" id="Q504Y0"/>
<dbReference type="PhosphoSitePlus" id="Q504Y0"/>
<dbReference type="SwissPalm" id="Q504Y0"/>
<dbReference type="BioMuta" id="SLC39A12"/>
<dbReference type="DMDM" id="313104190"/>
<dbReference type="jPOST" id="Q504Y0"/>
<dbReference type="MassIVE" id="Q504Y0"/>
<dbReference type="PaxDb" id="9606-ENSP00000366586"/>
<dbReference type="PeptideAtlas" id="Q504Y0"/>
<dbReference type="ProteomicsDB" id="24332"/>
<dbReference type="ProteomicsDB" id="62411">
    <molecule id="Q504Y0-1"/>
</dbReference>
<dbReference type="ProteomicsDB" id="62412">
    <molecule id="Q504Y0-2"/>
</dbReference>
<dbReference type="ProteomicsDB" id="62413">
    <molecule id="Q504Y0-3"/>
</dbReference>
<dbReference type="ProteomicsDB" id="62414">
    <molecule id="Q504Y0-4"/>
</dbReference>
<dbReference type="Antibodypedia" id="12047">
    <property type="antibodies" value="57 antibodies from 23 providers"/>
</dbReference>
<dbReference type="DNASU" id="221074"/>
<dbReference type="Ensembl" id="ENST00000377369.7">
    <molecule id="Q504Y0-1"/>
    <property type="protein sequence ID" value="ENSP00000366586.2"/>
    <property type="gene ID" value="ENSG00000148482.12"/>
</dbReference>
<dbReference type="Ensembl" id="ENST00000377371.3">
    <molecule id="Q504Y0-4"/>
    <property type="protein sequence ID" value="ENSP00000366588.3"/>
    <property type="gene ID" value="ENSG00000148482.12"/>
</dbReference>
<dbReference type="Ensembl" id="ENST00000377374.8">
    <molecule id="Q504Y0-3"/>
    <property type="protein sequence ID" value="ENSP00000366591.4"/>
    <property type="gene ID" value="ENSG00000148482.12"/>
</dbReference>
<dbReference type="Ensembl" id="ENST00000539911.5">
    <molecule id="Q504Y0-5"/>
    <property type="protein sequence ID" value="ENSP00000440445.1"/>
    <property type="gene ID" value="ENSG00000148482.12"/>
</dbReference>
<dbReference type="GeneID" id="221074"/>
<dbReference type="KEGG" id="hsa:221074"/>
<dbReference type="MANE-Select" id="ENST00000377369.7">
    <property type="protein sequence ID" value="ENSP00000366586.2"/>
    <property type="RefSeq nucleotide sequence ID" value="NM_001145195.2"/>
    <property type="RefSeq protein sequence ID" value="NP_001138667.1"/>
</dbReference>
<dbReference type="UCSC" id="uc001ipn.3">
    <molecule id="Q504Y0-1"/>
    <property type="organism name" value="human"/>
</dbReference>
<dbReference type="UCSC" id="uc010qck.1">
    <property type="organism name" value="human"/>
</dbReference>
<dbReference type="AGR" id="HGNC:20860"/>
<dbReference type="CTD" id="221074"/>
<dbReference type="DisGeNET" id="221074"/>
<dbReference type="GeneCards" id="SLC39A12"/>
<dbReference type="HGNC" id="HGNC:20860">
    <property type="gene designation" value="SLC39A12"/>
</dbReference>
<dbReference type="HPA" id="ENSG00000148482">
    <property type="expression patterns" value="Tissue enriched (choroid)"/>
</dbReference>
<dbReference type="MalaCards" id="SLC39A12"/>
<dbReference type="MIM" id="608734">
    <property type="type" value="gene"/>
</dbReference>
<dbReference type="neXtProt" id="NX_Q504Y0"/>
<dbReference type="OpenTargets" id="ENSG00000148482"/>
<dbReference type="PharmGKB" id="PA134956205"/>
<dbReference type="VEuPathDB" id="HostDB:ENSG00000148482"/>
<dbReference type="eggNOG" id="KOG2693">
    <property type="taxonomic scope" value="Eukaryota"/>
</dbReference>
<dbReference type="GeneTree" id="ENSGT00940000157914"/>
<dbReference type="InParanoid" id="Q504Y0"/>
<dbReference type="OMA" id="DMCEKCL"/>
<dbReference type="OrthoDB" id="200954at2759"/>
<dbReference type="PAN-GO" id="Q504Y0">
    <property type="GO annotations" value="4 GO annotations based on evolutionary models"/>
</dbReference>
<dbReference type="PhylomeDB" id="Q504Y0"/>
<dbReference type="TreeFam" id="TF318470"/>
<dbReference type="PathwayCommons" id="Q504Y0"/>
<dbReference type="SignaLink" id="Q504Y0"/>
<dbReference type="BioGRID-ORCS" id="221074">
    <property type="hits" value="6 hits in 1136 CRISPR screens"/>
</dbReference>
<dbReference type="GenomeRNAi" id="221074"/>
<dbReference type="Pharos" id="Q504Y0">
    <property type="development level" value="Tbio"/>
</dbReference>
<dbReference type="PRO" id="PR:Q504Y0"/>
<dbReference type="Proteomes" id="UP000005640">
    <property type="component" value="Chromosome 10"/>
</dbReference>
<dbReference type="RNAct" id="Q504Y0">
    <property type="molecule type" value="protein"/>
</dbReference>
<dbReference type="Bgee" id="ENSG00000148482">
    <property type="expression patterns" value="Expressed in pigmented layer of retina and 64 other cell types or tissues"/>
</dbReference>
<dbReference type="GO" id="GO:1903561">
    <property type="term" value="C:extracellular vesicle"/>
    <property type="evidence" value="ECO:0007005"/>
    <property type="project" value="UniProtKB"/>
</dbReference>
<dbReference type="GO" id="GO:0048471">
    <property type="term" value="C:perinuclear region of cytoplasm"/>
    <property type="evidence" value="ECO:0007669"/>
    <property type="project" value="Ensembl"/>
</dbReference>
<dbReference type="GO" id="GO:0005886">
    <property type="term" value="C:plasma membrane"/>
    <property type="evidence" value="ECO:0000318"/>
    <property type="project" value="GO_Central"/>
</dbReference>
<dbReference type="GO" id="GO:0140410">
    <property type="term" value="F:monoatomic cation:bicarbonate symporter activity"/>
    <property type="evidence" value="ECO:0000318"/>
    <property type="project" value="GO_Central"/>
</dbReference>
<dbReference type="GO" id="GO:0005385">
    <property type="term" value="F:zinc ion transmembrane transporter activity"/>
    <property type="evidence" value="ECO:0000250"/>
    <property type="project" value="UniProtKB"/>
</dbReference>
<dbReference type="GO" id="GO:0030003">
    <property type="term" value="P:intracellular monoatomic cation homeostasis"/>
    <property type="evidence" value="ECO:0000318"/>
    <property type="project" value="GO_Central"/>
</dbReference>
<dbReference type="GO" id="GO:0001841">
    <property type="term" value="P:neural tube formation"/>
    <property type="evidence" value="ECO:0000250"/>
    <property type="project" value="UniProtKB"/>
</dbReference>
<dbReference type="GO" id="GO:1990138">
    <property type="term" value="P:neuron projection extension"/>
    <property type="evidence" value="ECO:0000250"/>
    <property type="project" value="UniProtKB"/>
</dbReference>
<dbReference type="GO" id="GO:0031113">
    <property type="term" value="P:regulation of microtubule polymerization"/>
    <property type="evidence" value="ECO:0007669"/>
    <property type="project" value="Ensembl"/>
</dbReference>
<dbReference type="GO" id="GO:0010975">
    <property type="term" value="P:regulation of neuron projection development"/>
    <property type="evidence" value="ECO:0007669"/>
    <property type="project" value="Ensembl"/>
</dbReference>
<dbReference type="GO" id="GO:0007165">
    <property type="term" value="P:signal transduction"/>
    <property type="evidence" value="ECO:0007669"/>
    <property type="project" value="Ensembl"/>
</dbReference>
<dbReference type="GO" id="GO:0071578">
    <property type="term" value="P:zinc ion import across plasma membrane"/>
    <property type="evidence" value="ECO:0000250"/>
    <property type="project" value="UniProtKB"/>
</dbReference>
<dbReference type="InterPro" id="IPR003689">
    <property type="entry name" value="ZIP"/>
</dbReference>
<dbReference type="InterPro" id="IPR049406">
    <property type="entry name" value="ZIP4_12_EF-hand"/>
</dbReference>
<dbReference type="InterPro" id="IPR041137">
    <property type="entry name" value="ZIP4_N"/>
</dbReference>
<dbReference type="InterPro" id="IPR050799">
    <property type="entry name" value="ZIP_Transporter"/>
</dbReference>
<dbReference type="PANTHER" id="PTHR12191">
    <property type="entry name" value="SOLUTE CARRIER FAMILY 39"/>
    <property type="match status" value="1"/>
</dbReference>
<dbReference type="PANTHER" id="PTHR12191:SF4">
    <property type="entry name" value="ZINC TRANSPORTER ZIP12"/>
    <property type="match status" value="1"/>
</dbReference>
<dbReference type="Pfam" id="PF21116">
    <property type="entry name" value="EF-hand_Zip"/>
    <property type="match status" value="1"/>
</dbReference>
<dbReference type="Pfam" id="PF02535">
    <property type="entry name" value="Zip"/>
    <property type="match status" value="1"/>
</dbReference>
<dbReference type="Pfam" id="PF18292">
    <property type="entry name" value="ZIP4_domain"/>
    <property type="match status" value="1"/>
</dbReference>
<proteinExistence type="evidence at protein level"/>
<protein>
    <recommendedName>
        <fullName evidence="1">Zinc transporter ZIP12</fullName>
    </recommendedName>
    <alternativeName>
        <fullName>LIV-1 subfamily of ZIP zinc transporter 8</fullName>
        <shortName>LZT-Hs8</shortName>
    </alternativeName>
    <alternativeName>
        <fullName>Solute carrier family 39 member 12</fullName>
    </alternativeName>
    <alternativeName>
        <fullName>Zrt- and Irt-like protein 12</fullName>
        <shortName>ZIP-12</shortName>
    </alternativeName>
</protein>
<accession>Q504Y0</accession>
<accession>B7Z2Y9</accession>
<accession>B7ZL35</accession>
<accession>C9JJL4</accession>
<accession>F5GX72</accession>
<accession>Q49AN8</accession>
<accession>Q4G0L3</accession>
<accession>Q5VWV8</accession>
<accession>Q5VWV9</accession>
<accession>Q6NZY5</accession>
<accession>Q96NN4</accession>
<evidence type="ECO:0000250" key="1">
    <source>
        <dbReference type="UniProtKB" id="Q5FWH7"/>
    </source>
</evidence>
<evidence type="ECO:0000255" key="2"/>
<evidence type="ECO:0000269" key="3">
    <source>
    </source>
</evidence>
<evidence type="ECO:0000269" key="4">
    <source>
    </source>
</evidence>
<evidence type="ECO:0000269" key="5">
    <source>
    </source>
</evidence>
<evidence type="ECO:0000269" key="6">
    <source>
    </source>
</evidence>
<evidence type="ECO:0000269" key="7">
    <source>
    </source>
</evidence>
<evidence type="ECO:0000303" key="8">
    <source>
    </source>
</evidence>
<evidence type="ECO:0000303" key="9">
    <source>
    </source>
</evidence>
<evidence type="ECO:0000305" key="10"/>
<evidence type="ECO:0000312" key="11">
    <source>
        <dbReference type="HGNC" id="HGNC:20860"/>
    </source>
</evidence>